<name>TRPG_CYAPA</name>
<protein>
    <recommendedName>
        <fullName>Anthranilate synthase component 2</fullName>
        <shortName>AS</shortName>
        <ecNumber>4.1.3.27</ecNumber>
    </recommendedName>
    <alternativeName>
        <fullName>Anthranilate synthase, glutamine amidotransferase component</fullName>
    </alternativeName>
</protein>
<comment type="catalytic activity">
    <reaction>
        <text>chorismate + L-glutamine = anthranilate + pyruvate + L-glutamate + H(+)</text>
        <dbReference type="Rhea" id="RHEA:21732"/>
        <dbReference type="ChEBI" id="CHEBI:15361"/>
        <dbReference type="ChEBI" id="CHEBI:15378"/>
        <dbReference type="ChEBI" id="CHEBI:16567"/>
        <dbReference type="ChEBI" id="CHEBI:29748"/>
        <dbReference type="ChEBI" id="CHEBI:29985"/>
        <dbReference type="ChEBI" id="CHEBI:58359"/>
        <dbReference type="EC" id="4.1.3.27"/>
    </reaction>
</comment>
<comment type="pathway">
    <text>Amino-acid biosynthesis; L-tryptophan biosynthesis; L-tryptophan from chorismate: step 1/5.</text>
</comment>
<comment type="subunit">
    <text evidence="1">Tetramer of two components I and two components II.</text>
</comment>
<comment type="subcellular location">
    <subcellularLocation>
        <location>Plastid</location>
        <location>Cyanelle</location>
    </subcellularLocation>
</comment>
<comment type="miscellaneous">
    <text>Component I catalyzes the formation of anthranilate using ammonia rather than glutamine, whereas component II provides glutamine amidotransferase activity.</text>
</comment>
<proteinExistence type="inferred from homology"/>
<keyword id="KW-0028">Amino-acid biosynthesis</keyword>
<keyword id="KW-0057">Aromatic amino acid biosynthesis</keyword>
<keyword id="KW-0194">Cyanelle</keyword>
<keyword id="KW-0315">Glutamine amidotransferase</keyword>
<keyword id="KW-0456">Lyase</keyword>
<keyword id="KW-0934">Plastid</keyword>
<keyword id="KW-0822">Tryptophan biosynthesis</keyword>
<dbReference type="EC" id="4.1.3.27"/>
<dbReference type="EMBL" id="U30821">
    <property type="protein sequence ID" value="AAA81296.1"/>
    <property type="molecule type" value="Genomic_DNA"/>
</dbReference>
<dbReference type="PIR" id="T06953">
    <property type="entry name" value="T06953"/>
</dbReference>
<dbReference type="RefSeq" id="NP_043265.1">
    <property type="nucleotide sequence ID" value="NC_001675.1"/>
</dbReference>
<dbReference type="SMR" id="P48261"/>
<dbReference type="GeneID" id="801682"/>
<dbReference type="UniPathway" id="UPA00035">
    <property type="reaction ID" value="UER00040"/>
</dbReference>
<dbReference type="GO" id="GO:0009842">
    <property type="term" value="C:cyanelle"/>
    <property type="evidence" value="ECO:0007669"/>
    <property type="project" value="UniProtKB-SubCell"/>
</dbReference>
<dbReference type="GO" id="GO:0005829">
    <property type="term" value="C:cytosol"/>
    <property type="evidence" value="ECO:0007669"/>
    <property type="project" value="TreeGrafter"/>
</dbReference>
<dbReference type="GO" id="GO:0004049">
    <property type="term" value="F:anthranilate synthase activity"/>
    <property type="evidence" value="ECO:0007669"/>
    <property type="project" value="UniProtKB-EC"/>
</dbReference>
<dbReference type="GO" id="GO:0000162">
    <property type="term" value="P:L-tryptophan biosynthetic process"/>
    <property type="evidence" value="ECO:0007669"/>
    <property type="project" value="UniProtKB-UniPathway"/>
</dbReference>
<dbReference type="CDD" id="cd01743">
    <property type="entry name" value="GATase1_Anthranilate_Synthase"/>
    <property type="match status" value="1"/>
</dbReference>
<dbReference type="FunFam" id="3.40.50.880:FF:000003">
    <property type="entry name" value="Anthranilate synthase component II"/>
    <property type="match status" value="1"/>
</dbReference>
<dbReference type="Gene3D" id="3.40.50.880">
    <property type="match status" value="1"/>
</dbReference>
<dbReference type="InterPro" id="IPR050472">
    <property type="entry name" value="Anth_synth/Amidotransfase"/>
</dbReference>
<dbReference type="InterPro" id="IPR029062">
    <property type="entry name" value="Class_I_gatase-like"/>
</dbReference>
<dbReference type="InterPro" id="IPR017926">
    <property type="entry name" value="GATASE"/>
</dbReference>
<dbReference type="InterPro" id="IPR006221">
    <property type="entry name" value="TrpG/PapA_dom"/>
</dbReference>
<dbReference type="NCBIfam" id="TIGR00566">
    <property type="entry name" value="trpG_papA"/>
    <property type="match status" value="1"/>
</dbReference>
<dbReference type="PANTHER" id="PTHR43418:SF4">
    <property type="entry name" value="MULTIFUNCTIONAL TRYPTOPHAN BIOSYNTHESIS PROTEIN"/>
    <property type="match status" value="1"/>
</dbReference>
<dbReference type="PANTHER" id="PTHR43418">
    <property type="entry name" value="MULTIFUNCTIONAL TRYPTOPHAN BIOSYNTHESIS PROTEIN-RELATED"/>
    <property type="match status" value="1"/>
</dbReference>
<dbReference type="Pfam" id="PF00117">
    <property type="entry name" value="GATase"/>
    <property type="match status" value="1"/>
</dbReference>
<dbReference type="PRINTS" id="PR00097">
    <property type="entry name" value="ANTSNTHASEII"/>
</dbReference>
<dbReference type="PRINTS" id="PR00099">
    <property type="entry name" value="CPSGATASE"/>
</dbReference>
<dbReference type="PRINTS" id="PR00096">
    <property type="entry name" value="GATASE"/>
</dbReference>
<dbReference type="SUPFAM" id="SSF52317">
    <property type="entry name" value="Class I glutamine amidotransferase-like"/>
    <property type="match status" value="1"/>
</dbReference>
<dbReference type="PROSITE" id="PS51273">
    <property type="entry name" value="GATASE_TYPE_1"/>
    <property type="match status" value="1"/>
</dbReference>
<accession>P48261</accession>
<geneLocation type="cyanelle"/>
<evidence type="ECO:0000250" key="1"/>
<evidence type="ECO:0000250" key="2">
    <source>
        <dbReference type="UniProtKB" id="P00900"/>
    </source>
</evidence>
<evidence type="ECO:0000255" key="3">
    <source>
        <dbReference type="PROSITE-ProRule" id="PRU00605"/>
    </source>
</evidence>
<gene>
    <name type="primary">trpG</name>
</gene>
<feature type="chain" id="PRO_0000056892" description="Anthranilate synthase component 2">
    <location>
        <begin position="1"/>
        <end position="190"/>
    </location>
</feature>
<feature type="domain" description="Glutamine amidotransferase type-1" evidence="3">
    <location>
        <begin position="1"/>
        <end position="190"/>
    </location>
</feature>
<feature type="active site" description="Nucleophile; for GATase activity" evidence="2">
    <location>
        <position position="79"/>
    </location>
</feature>
<feature type="active site" evidence="3">
    <location>
        <position position="169"/>
    </location>
</feature>
<feature type="active site" evidence="3">
    <location>
        <position position="171"/>
    </location>
</feature>
<feature type="binding site" evidence="2">
    <location>
        <begin position="52"/>
        <end position="54"/>
    </location>
    <ligand>
        <name>L-glutamine</name>
        <dbReference type="ChEBI" id="CHEBI:58359"/>
    </ligand>
</feature>
<feature type="binding site" evidence="2">
    <location>
        <position position="83"/>
    </location>
    <ligand>
        <name>L-glutamine</name>
        <dbReference type="ChEBI" id="CHEBI:58359"/>
    </ligand>
</feature>
<feature type="binding site" evidence="2">
    <location>
        <begin position="129"/>
        <end position="130"/>
    </location>
    <ligand>
        <name>L-glutamine</name>
        <dbReference type="ChEBI" id="CHEBI:58359"/>
    </ligand>
</feature>
<sequence>MILLIDNYDSFTYNLAQYLSELNIKVLVKRNDKITLDEIKNLNIQGIIISPCPGGPEDSGISQGIIKYLGNQIPILGVCLGHQTIGHVFGGKIIKAPKLIHGKPSIIFHDGKGVFQNLKNPITATRYHSLIIEKESCPDELEITAWTEDGLIMGIQHKKYKQLQGIQFHPESILTESGKQILQNFINCLN</sequence>
<reference key="1">
    <citation type="journal article" date="1995" name="Plant Mol. Biol. Rep.">
        <title>Nucleotide sequence of the cyanelle DNA from Cyanophora paradoxa.</title>
        <authorList>
            <person name="Stirewalt V.L."/>
            <person name="Michalowski C.B."/>
            <person name="Loeffelhardt W."/>
            <person name="Bohnert H.J."/>
            <person name="Bryant D.A."/>
        </authorList>
    </citation>
    <scope>NUCLEOTIDE SEQUENCE [LARGE SCALE GENOMIC DNA]</scope>
    <source>
        <strain>UTEX LB 555 / Pringsheim</strain>
    </source>
</reference>
<reference key="2">
    <citation type="book" date="1997" name="Eukaryotism and symbiosis">
        <title>The complete sequence of the cyanelle genome of Cyanophora paradoxa: the genetic complexity of a primitive plastid.</title>
        <editorList>
            <person name="Schenk H.E.A."/>
            <person name="Herrmann R."/>
            <person name="Jeon K.W."/>
            <person name="Mueller N.E."/>
            <person name="Schwemmler W."/>
        </editorList>
        <authorList>
            <person name="Loeffelhardt W."/>
            <person name="Stirewalt V.L."/>
            <person name="Michalowski C.B."/>
            <person name="Annarella M."/>
            <person name="Farley J.Y."/>
            <person name="Schluchter W.M."/>
            <person name="Chung S."/>
            <person name="Newmann-Spallart C."/>
            <person name="Steiner J.M."/>
            <person name="Jakowitsch J."/>
            <person name="Bohnert H.J."/>
            <person name="Bryant D.A."/>
        </authorList>
    </citation>
    <scope>NUCLEOTIDE SEQUENCE [LARGE SCALE GENOMIC DNA]</scope>
    <source>
        <strain>UTEX LB 555 / Pringsheim</strain>
    </source>
</reference>
<organism>
    <name type="scientific">Cyanophora paradoxa</name>
    <dbReference type="NCBI Taxonomy" id="2762"/>
    <lineage>
        <taxon>Eukaryota</taxon>
        <taxon>Glaucocystophyceae</taxon>
        <taxon>Cyanophoraceae</taxon>
        <taxon>Cyanophora</taxon>
    </lineage>
</organism>